<proteinExistence type="evidence at transcript level"/>
<protein>
    <recommendedName>
        <fullName>Protein yippee-like At3g08990</fullName>
    </recommendedName>
</protein>
<organism>
    <name type="scientific">Arabidopsis thaliana</name>
    <name type="common">Mouse-ear cress</name>
    <dbReference type="NCBI Taxonomy" id="3702"/>
    <lineage>
        <taxon>Eukaryota</taxon>
        <taxon>Viridiplantae</taxon>
        <taxon>Streptophyta</taxon>
        <taxon>Embryophyta</taxon>
        <taxon>Tracheophyta</taxon>
        <taxon>Spermatophyta</taxon>
        <taxon>Magnoliopsida</taxon>
        <taxon>eudicotyledons</taxon>
        <taxon>Gunneridae</taxon>
        <taxon>Pentapetalae</taxon>
        <taxon>rosids</taxon>
        <taxon>malvids</taxon>
        <taxon>Brassicales</taxon>
        <taxon>Brassicaceae</taxon>
        <taxon>Camelineae</taxon>
        <taxon>Arabidopsis</taxon>
    </lineage>
</organism>
<accession>Q9SR97</accession>
<accession>Q1ECM9</accession>
<accession>Q9SS85</accession>
<gene>
    <name type="ordered locus">At3g08990</name>
    <name type="ORF">MZB10.2</name>
    <name type="ORF">T16O11.5</name>
</gene>
<feature type="chain" id="PRO_0000212402" description="Protein yippee-like At3g08990">
    <location>
        <begin position="1"/>
        <end position="128"/>
    </location>
</feature>
<feature type="domain" description="Yippee" evidence="1">
    <location>
        <begin position="12"/>
        <end position="109"/>
    </location>
</feature>
<feature type="binding site" evidence="1">
    <location>
        <position position="16"/>
    </location>
    <ligand>
        <name>Zn(2+)</name>
        <dbReference type="ChEBI" id="CHEBI:29105"/>
    </ligand>
</feature>
<feature type="binding site" evidence="1">
    <location>
        <position position="19"/>
    </location>
    <ligand>
        <name>Zn(2+)</name>
        <dbReference type="ChEBI" id="CHEBI:29105"/>
    </ligand>
</feature>
<feature type="binding site" evidence="1">
    <location>
        <position position="72"/>
    </location>
    <ligand>
        <name>Zn(2+)</name>
        <dbReference type="ChEBI" id="CHEBI:29105"/>
    </ligand>
</feature>
<feature type="binding site" evidence="1">
    <location>
        <position position="75"/>
    </location>
    <ligand>
        <name>Zn(2+)</name>
        <dbReference type="ChEBI" id="CHEBI:29105"/>
    </ligand>
</feature>
<dbReference type="EMBL" id="AC009326">
    <property type="protein sequence ID" value="AAD56315.1"/>
    <property type="status" value="ALT_SEQ"/>
    <property type="molecule type" value="Genomic_DNA"/>
</dbReference>
<dbReference type="EMBL" id="AC010871">
    <property type="protein sequence ID" value="AAF07828.1"/>
    <property type="status" value="ALT_SEQ"/>
    <property type="molecule type" value="Genomic_DNA"/>
</dbReference>
<dbReference type="EMBL" id="CP002686">
    <property type="protein sequence ID" value="AEE74705.1"/>
    <property type="molecule type" value="Genomic_DNA"/>
</dbReference>
<dbReference type="EMBL" id="CP002686">
    <property type="protein sequence ID" value="AEE74706.1"/>
    <property type="molecule type" value="Genomic_DNA"/>
</dbReference>
<dbReference type="EMBL" id="CP002686">
    <property type="protein sequence ID" value="ANM65769.1"/>
    <property type="molecule type" value="Genomic_DNA"/>
</dbReference>
<dbReference type="EMBL" id="BT025705">
    <property type="protein sequence ID" value="ABF82608.1"/>
    <property type="molecule type" value="mRNA"/>
</dbReference>
<dbReference type="RefSeq" id="NP_001189843.1">
    <property type="nucleotide sequence ID" value="NM_001202914.2"/>
</dbReference>
<dbReference type="RefSeq" id="NP_001327715.1">
    <property type="nucleotide sequence ID" value="NM_001337793.1"/>
</dbReference>
<dbReference type="RefSeq" id="NP_187511.2">
    <property type="nucleotide sequence ID" value="NM_111733.4"/>
</dbReference>
<dbReference type="SMR" id="Q9SR97"/>
<dbReference type="FunCoup" id="Q9SR97">
    <property type="interactions" value="82"/>
</dbReference>
<dbReference type="STRING" id="3702.Q9SR97"/>
<dbReference type="GlyGen" id="Q9SR97">
    <property type="glycosylation" value="1 site"/>
</dbReference>
<dbReference type="PaxDb" id="3702-AT3G08990.1"/>
<dbReference type="ProteomicsDB" id="242928"/>
<dbReference type="EnsemblPlants" id="AT3G08990.1">
    <property type="protein sequence ID" value="AT3G08990.1"/>
    <property type="gene ID" value="AT3G08990"/>
</dbReference>
<dbReference type="EnsemblPlants" id="AT3G08990.2">
    <property type="protein sequence ID" value="AT3G08990.2"/>
    <property type="gene ID" value="AT3G08990"/>
</dbReference>
<dbReference type="EnsemblPlants" id="AT3G08990.3">
    <property type="protein sequence ID" value="AT3G08990.3"/>
    <property type="gene ID" value="AT3G08990"/>
</dbReference>
<dbReference type="GeneID" id="820051"/>
<dbReference type="Gramene" id="AT3G08990.1">
    <property type="protein sequence ID" value="AT3G08990.1"/>
    <property type="gene ID" value="AT3G08990"/>
</dbReference>
<dbReference type="Gramene" id="AT3G08990.2">
    <property type="protein sequence ID" value="AT3G08990.2"/>
    <property type="gene ID" value="AT3G08990"/>
</dbReference>
<dbReference type="Gramene" id="AT3G08990.3">
    <property type="protein sequence ID" value="AT3G08990.3"/>
    <property type="gene ID" value="AT3G08990"/>
</dbReference>
<dbReference type="KEGG" id="ath:AT3G08990"/>
<dbReference type="Araport" id="AT3G08990"/>
<dbReference type="TAIR" id="AT3G08990"/>
<dbReference type="eggNOG" id="KOG3399">
    <property type="taxonomic scope" value="Eukaryota"/>
</dbReference>
<dbReference type="HOGENOM" id="CLU_043857_1_1_1"/>
<dbReference type="InParanoid" id="Q9SR97"/>
<dbReference type="OMA" id="EGLVYSC"/>
<dbReference type="PhylomeDB" id="Q9SR97"/>
<dbReference type="PRO" id="PR:Q9SR97"/>
<dbReference type="Proteomes" id="UP000006548">
    <property type="component" value="Chromosome 3"/>
</dbReference>
<dbReference type="ExpressionAtlas" id="Q9SR97">
    <property type="expression patterns" value="baseline and differential"/>
</dbReference>
<dbReference type="GO" id="GO:0046872">
    <property type="term" value="F:metal ion binding"/>
    <property type="evidence" value="ECO:0007669"/>
    <property type="project" value="UniProtKB-KW"/>
</dbReference>
<dbReference type="InterPro" id="IPR034751">
    <property type="entry name" value="Yippee"/>
</dbReference>
<dbReference type="InterPro" id="IPR004910">
    <property type="entry name" value="Yippee/Mis18/Cereblon"/>
</dbReference>
<dbReference type="InterPro" id="IPR039058">
    <property type="entry name" value="Yippee_fam"/>
</dbReference>
<dbReference type="PANTHER" id="PTHR13848">
    <property type="entry name" value="PROTEIN YIPPEE-LIKE CG15309-RELATED"/>
    <property type="match status" value="1"/>
</dbReference>
<dbReference type="Pfam" id="PF03226">
    <property type="entry name" value="Yippee-Mis18"/>
    <property type="match status" value="1"/>
</dbReference>
<dbReference type="PROSITE" id="PS51792">
    <property type="entry name" value="YIPPEE"/>
    <property type="match status" value="1"/>
</dbReference>
<keyword id="KW-0479">Metal-binding</keyword>
<keyword id="KW-1185">Reference proteome</keyword>
<keyword id="KW-0862">Zinc</keyword>
<comment type="similarity">
    <text evidence="2">Belongs to the yippee family.</text>
</comment>
<comment type="sequence caution" evidence="2">
    <conflict type="erroneous gene model prediction">
        <sequence resource="EMBL-CDS" id="AAD56315"/>
    </conflict>
</comment>
<comment type="sequence caution" evidence="2">
    <conflict type="erroneous gene model prediction">
        <sequence resource="EMBL-CDS" id="AAF07828"/>
    </conflict>
</comment>
<name>YIPL1_ARATH</name>
<sequence>MGRLFVIDLEGLVYSCKYCQTHFAVTNDIISKSFHCKHGRAYLFDNVVNVTVGEKEHRVMITGWHTVADIFCVSCGSLVGWKYEIAYDKSQKYKEGKFILERFKVLGPYGGGYDMNQNEPMTGSDDEE</sequence>
<reference key="1">
    <citation type="journal article" date="2000" name="Nature">
        <title>Sequence and analysis of chromosome 3 of the plant Arabidopsis thaliana.</title>
        <authorList>
            <person name="Salanoubat M."/>
            <person name="Lemcke K."/>
            <person name="Rieger M."/>
            <person name="Ansorge W."/>
            <person name="Unseld M."/>
            <person name="Fartmann B."/>
            <person name="Valle G."/>
            <person name="Bloecker H."/>
            <person name="Perez-Alonso M."/>
            <person name="Obermaier B."/>
            <person name="Delseny M."/>
            <person name="Boutry M."/>
            <person name="Grivell L.A."/>
            <person name="Mache R."/>
            <person name="Puigdomenech P."/>
            <person name="De Simone V."/>
            <person name="Choisne N."/>
            <person name="Artiguenave F."/>
            <person name="Robert C."/>
            <person name="Brottier P."/>
            <person name="Wincker P."/>
            <person name="Cattolico L."/>
            <person name="Weissenbach J."/>
            <person name="Saurin W."/>
            <person name="Quetier F."/>
            <person name="Schaefer M."/>
            <person name="Mueller-Auer S."/>
            <person name="Gabel C."/>
            <person name="Fuchs M."/>
            <person name="Benes V."/>
            <person name="Wurmbach E."/>
            <person name="Drzonek H."/>
            <person name="Erfle H."/>
            <person name="Jordan N."/>
            <person name="Bangert S."/>
            <person name="Wiedelmann R."/>
            <person name="Kranz H."/>
            <person name="Voss H."/>
            <person name="Holland R."/>
            <person name="Brandt P."/>
            <person name="Nyakatura G."/>
            <person name="Vezzi A."/>
            <person name="D'Angelo M."/>
            <person name="Pallavicini A."/>
            <person name="Toppo S."/>
            <person name="Simionati B."/>
            <person name="Conrad A."/>
            <person name="Hornischer K."/>
            <person name="Kauer G."/>
            <person name="Loehnert T.-H."/>
            <person name="Nordsiek G."/>
            <person name="Reichelt J."/>
            <person name="Scharfe M."/>
            <person name="Schoen O."/>
            <person name="Bargues M."/>
            <person name="Terol J."/>
            <person name="Climent J."/>
            <person name="Navarro P."/>
            <person name="Collado C."/>
            <person name="Perez-Perez A."/>
            <person name="Ottenwaelder B."/>
            <person name="Duchemin D."/>
            <person name="Cooke R."/>
            <person name="Laudie M."/>
            <person name="Berger-Llauro C."/>
            <person name="Purnelle B."/>
            <person name="Masuy D."/>
            <person name="de Haan M."/>
            <person name="Maarse A.C."/>
            <person name="Alcaraz J.-P."/>
            <person name="Cottet A."/>
            <person name="Casacuberta E."/>
            <person name="Monfort A."/>
            <person name="Argiriou A."/>
            <person name="Flores M."/>
            <person name="Liguori R."/>
            <person name="Vitale D."/>
            <person name="Mannhaupt G."/>
            <person name="Haase D."/>
            <person name="Schoof H."/>
            <person name="Rudd S."/>
            <person name="Zaccaria P."/>
            <person name="Mewes H.-W."/>
            <person name="Mayer K.F.X."/>
            <person name="Kaul S."/>
            <person name="Town C.D."/>
            <person name="Koo H.L."/>
            <person name="Tallon L.J."/>
            <person name="Jenkins J."/>
            <person name="Rooney T."/>
            <person name="Rizzo M."/>
            <person name="Walts A."/>
            <person name="Utterback T."/>
            <person name="Fujii C.Y."/>
            <person name="Shea T.P."/>
            <person name="Creasy T.H."/>
            <person name="Haas B."/>
            <person name="Maiti R."/>
            <person name="Wu D."/>
            <person name="Peterson J."/>
            <person name="Van Aken S."/>
            <person name="Pai G."/>
            <person name="Militscher J."/>
            <person name="Sellers P."/>
            <person name="Gill J.E."/>
            <person name="Feldblyum T.V."/>
            <person name="Preuss D."/>
            <person name="Lin X."/>
            <person name="Nierman W.C."/>
            <person name="Salzberg S.L."/>
            <person name="White O."/>
            <person name="Venter J.C."/>
            <person name="Fraser C.M."/>
            <person name="Kaneko T."/>
            <person name="Nakamura Y."/>
            <person name="Sato S."/>
            <person name="Kato T."/>
            <person name="Asamizu E."/>
            <person name="Sasamoto S."/>
            <person name="Kimura T."/>
            <person name="Idesawa K."/>
            <person name="Kawashima K."/>
            <person name="Kishida Y."/>
            <person name="Kiyokawa C."/>
            <person name="Kohara M."/>
            <person name="Matsumoto M."/>
            <person name="Matsuno A."/>
            <person name="Muraki A."/>
            <person name="Nakayama S."/>
            <person name="Nakazaki N."/>
            <person name="Shinpo S."/>
            <person name="Takeuchi C."/>
            <person name="Wada T."/>
            <person name="Watanabe A."/>
            <person name="Yamada M."/>
            <person name="Yasuda M."/>
            <person name="Tabata S."/>
        </authorList>
    </citation>
    <scope>NUCLEOTIDE SEQUENCE [LARGE SCALE GENOMIC DNA]</scope>
    <source>
        <strain>cv. Columbia</strain>
    </source>
</reference>
<reference key="2">
    <citation type="journal article" date="2017" name="Plant J.">
        <title>Araport11: a complete reannotation of the Arabidopsis thaliana reference genome.</title>
        <authorList>
            <person name="Cheng C.Y."/>
            <person name="Krishnakumar V."/>
            <person name="Chan A.P."/>
            <person name="Thibaud-Nissen F."/>
            <person name="Schobel S."/>
            <person name="Town C.D."/>
        </authorList>
    </citation>
    <scope>GENOME REANNOTATION</scope>
    <source>
        <strain>cv. Columbia</strain>
    </source>
</reference>
<reference key="3">
    <citation type="submission" date="2006-06" db="EMBL/GenBank/DDBJ databases">
        <title>Arabidopsis ORF clones.</title>
        <authorList>
            <person name="Quinitio C."/>
            <person name="Chen H."/>
            <person name="Kim C.J."/>
            <person name="Shinn P."/>
            <person name="Ecker J.R."/>
        </authorList>
    </citation>
    <scope>NUCLEOTIDE SEQUENCE [LARGE SCALE MRNA]</scope>
    <source>
        <strain>cv. Columbia</strain>
    </source>
</reference>
<evidence type="ECO:0000255" key="1">
    <source>
        <dbReference type="PROSITE-ProRule" id="PRU01128"/>
    </source>
</evidence>
<evidence type="ECO:0000305" key="2"/>